<evidence type="ECO:0000250" key="1">
    <source>
        <dbReference type="UniProtKB" id="P20336"/>
    </source>
</evidence>
<evidence type="ECO:0000250" key="2">
    <source>
        <dbReference type="UniProtKB" id="P62820"/>
    </source>
</evidence>
<evidence type="ECO:0000250" key="3">
    <source>
        <dbReference type="UniProtKB" id="Q8BHD0"/>
    </source>
</evidence>
<evidence type="ECO:0000250" key="4">
    <source>
        <dbReference type="UniProtKB" id="Q96DA2"/>
    </source>
</evidence>
<evidence type="ECO:0000255" key="5">
    <source>
        <dbReference type="PROSITE-ProRule" id="PRU00753"/>
    </source>
</evidence>
<evidence type="ECO:0000269" key="6">
    <source>
    </source>
</evidence>
<evidence type="ECO:0000269" key="7">
    <source>
    </source>
</evidence>
<evidence type="ECO:0000269" key="8">
    <source>
    </source>
</evidence>
<evidence type="ECO:0000305" key="9"/>
<evidence type="ECO:0000312" key="10">
    <source>
        <dbReference type="HGNC" id="HGNC:16521"/>
    </source>
</evidence>
<accession>Q14964</accession>
<accession>A8KAA4</accession>
<accession>Q8N6W2</accession>
<sequence>METIWIYQFRLIVIGDSTVGKSCLLHRFTQGRFPGLRSPACDPTVGVDFFSRLLEIEPGKRIKLQLWDTAGQERFRSITRSYYRNSVGGFLVFDITNRRSFEHVKDWLEEAKMYVQPFRIVFLLVGHKCDLASQRQVTREEAEKLSADCGMKYIETSAKDATNVEESFTILTRDIYELIKKGEICIQDGWEGVKSGFVPNTVHSSEEAVKPRKECFC</sequence>
<proteinExistence type="evidence at protein level"/>
<reference key="1">
    <citation type="journal article" date="1997" name="Genomics">
        <title>Construction of a transcription map around the gene for ataxia telangiectasia; identification of at least four novel genes.</title>
        <authorList>
            <person name="Stankovic T."/>
            <person name="Byrd P.J."/>
            <person name="Cooper P.R."/>
            <person name="McConville C.M."/>
            <person name="Munroe D.J."/>
            <person name="Riley J.H."/>
            <person name="Watts G.D.J."/>
            <person name="Ambrose H."/>
            <person name="McGuire G."/>
            <person name="Smith A.D."/>
            <person name="Sutcliffe A."/>
            <person name="Mills T."/>
            <person name="Taylor A.M.R."/>
        </authorList>
    </citation>
    <scope>NUCLEOTIDE SEQUENCE [MRNA]</scope>
</reference>
<reference key="2">
    <citation type="journal article" date="2004" name="Nat. Genet.">
        <title>Complete sequencing and characterization of 21,243 full-length human cDNAs.</title>
        <authorList>
            <person name="Ota T."/>
            <person name="Suzuki Y."/>
            <person name="Nishikawa T."/>
            <person name="Otsuki T."/>
            <person name="Sugiyama T."/>
            <person name="Irie R."/>
            <person name="Wakamatsu A."/>
            <person name="Hayashi K."/>
            <person name="Sato H."/>
            <person name="Nagai K."/>
            <person name="Kimura K."/>
            <person name="Makita H."/>
            <person name="Sekine M."/>
            <person name="Obayashi M."/>
            <person name="Nishi T."/>
            <person name="Shibahara T."/>
            <person name="Tanaka T."/>
            <person name="Ishii S."/>
            <person name="Yamamoto J."/>
            <person name="Saito K."/>
            <person name="Kawai Y."/>
            <person name="Isono Y."/>
            <person name="Nakamura Y."/>
            <person name="Nagahari K."/>
            <person name="Murakami K."/>
            <person name="Yasuda T."/>
            <person name="Iwayanagi T."/>
            <person name="Wagatsuma M."/>
            <person name="Shiratori A."/>
            <person name="Sudo H."/>
            <person name="Hosoiri T."/>
            <person name="Kaku Y."/>
            <person name="Kodaira H."/>
            <person name="Kondo H."/>
            <person name="Sugawara M."/>
            <person name="Takahashi M."/>
            <person name="Kanda K."/>
            <person name="Yokoi T."/>
            <person name="Furuya T."/>
            <person name="Kikkawa E."/>
            <person name="Omura Y."/>
            <person name="Abe K."/>
            <person name="Kamihara K."/>
            <person name="Katsuta N."/>
            <person name="Sato K."/>
            <person name="Tanikawa M."/>
            <person name="Yamazaki M."/>
            <person name="Ninomiya K."/>
            <person name="Ishibashi T."/>
            <person name="Yamashita H."/>
            <person name="Murakawa K."/>
            <person name="Fujimori K."/>
            <person name="Tanai H."/>
            <person name="Kimata M."/>
            <person name="Watanabe M."/>
            <person name="Hiraoka S."/>
            <person name="Chiba Y."/>
            <person name="Ishida S."/>
            <person name="Ono Y."/>
            <person name="Takiguchi S."/>
            <person name="Watanabe S."/>
            <person name="Yosida M."/>
            <person name="Hotuta T."/>
            <person name="Kusano J."/>
            <person name="Kanehori K."/>
            <person name="Takahashi-Fujii A."/>
            <person name="Hara H."/>
            <person name="Tanase T.-O."/>
            <person name="Nomura Y."/>
            <person name="Togiya S."/>
            <person name="Komai F."/>
            <person name="Hara R."/>
            <person name="Takeuchi K."/>
            <person name="Arita M."/>
            <person name="Imose N."/>
            <person name="Musashino K."/>
            <person name="Yuuki H."/>
            <person name="Oshima A."/>
            <person name="Sasaki N."/>
            <person name="Aotsuka S."/>
            <person name="Yoshikawa Y."/>
            <person name="Matsunawa H."/>
            <person name="Ichihara T."/>
            <person name="Shiohata N."/>
            <person name="Sano S."/>
            <person name="Moriya S."/>
            <person name="Momiyama H."/>
            <person name="Satoh N."/>
            <person name="Takami S."/>
            <person name="Terashima Y."/>
            <person name="Suzuki O."/>
            <person name="Nakagawa S."/>
            <person name="Senoh A."/>
            <person name="Mizoguchi H."/>
            <person name="Goto Y."/>
            <person name="Shimizu F."/>
            <person name="Wakebe H."/>
            <person name="Hishigaki H."/>
            <person name="Watanabe T."/>
            <person name="Sugiyama A."/>
            <person name="Takemoto M."/>
            <person name="Kawakami B."/>
            <person name="Yamazaki M."/>
            <person name="Watanabe K."/>
            <person name="Kumagai A."/>
            <person name="Itakura S."/>
            <person name="Fukuzumi Y."/>
            <person name="Fujimori Y."/>
            <person name="Komiyama M."/>
            <person name="Tashiro H."/>
            <person name="Tanigami A."/>
            <person name="Fujiwara T."/>
            <person name="Ono T."/>
            <person name="Yamada K."/>
            <person name="Fujii Y."/>
            <person name="Ozaki K."/>
            <person name="Hirao M."/>
            <person name="Ohmori Y."/>
            <person name="Kawabata A."/>
            <person name="Hikiji T."/>
            <person name="Kobatake N."/>
            <person name="Inagaki H."/>
            <person name="Ikema Y."/>
            <person name="Okamoto S."/>
            <person name="Okitani R."/>
            <person name="Kawakami T."/>
            <person name="Noguchi S."/>
            <person name="Itoh T."/>
            <person name="Shigeta K."/>
            <person name="Senba T."/>
            <person name="Matsumura K."/>
            <person name="Nakajima Y."/>
            <person name="Mizuno T."/>
            <person name="Morinaga M."/>
            <person name="Sasaki M."/>
            <person name="Togashi T."/>
            <person name="Oyama M."/>
            <person name="Hata H."/>
            <person name="Watanabe M."/>
            <person name="Komatsu T."/>
            <person name="Mizushima-Sugano J."/>
            <person name="Satoh T."/>
            <person name="Shirai Y."/>
            <person name="Takahashi Y."/>
            <person name="Nakagawa K."/>
            <person name="Okumura K."/>
            <person name="Nagase T."/>
            <person name="Nomura N."/>
            <person name="Kikuchi H."/>
            <person name="Masuho Y."/>
            <person name="Yamashita R."/>
            <person name="Nakai K."/>
            <person name="Yada T."/>
            <person name="Nakamura Y."/>
            <person name="Ohara O."/>
            <person name="Isogai T."/>
            <person name="Sugano S."/>
        </authorList>
    </citation>
    <scope>NUCLEOTIDE SEQUENCE [LARGE SCALE MRNA]</scope>
    <source>
        <tissue>Trachea</tissue>
    </source>
</reference>
<reference key="3">
    <citation type="submission" date="2005-07" db="EMBL/GenBank/DDBJ databases">
        <authorList>
            <person name="Mural R.J."/>
            <person name="Istrail S."/>
            <person name="Sutton G.G."/>
            <person name="Florea L."/>
            <person name="Halpern A.L."/>
            <person name="Mobarry C.M."/>
            <person name="Lippert R."/>
            <person name="Walenz B."/>
            <person name="Shatkay H."/>
            <person name="Dew I."/>
            <person name="Miller J.R."/>
            <person name="Flanigan M.J."/>
            <person name="Edwards N.J."/>
            <person name="Bolanos R."/>
            <person name="Fasulo D."/>
            <person name="Halldorsson B.V."/>
            <person name="Hannenhalli S."/>
            <person name="Turner R."/>
            <person name="Yooseph S."/>
            <person name="Lu F."/>
            <person name="Nusskern D.R."/>
            <person name="Shue B.C."/>
            <person name="Zheng X.H."/>
            <person name="Zhong F."/>
            <person name="Delcher A.L."/>
            <person name="Huson D.H."/>
            <person name="Kravitz S.A."/>
            <person name="Mouchard L."/>
            <person name="Reinert K."/>
            <person name="Remington K.A."/>
            <person name="Clark A.G."/>
            <person name="Waterman M.S."/>
            <person name="Eichler E.E."/>
            <person name="Adams M.D."/>
            <person name="Hunkapiller M.W."/>
            <person name="Myers E.W."/>
            <person name="Venter J.C."/>
        </authorList>
    </citation>
    <scope>NUCLEOTIDE SEQUENCE [LARGE SCALE GENOMIC DNA]</scope>
</reference>
<reference key="4">
    <citation type="journal article" date="2004" name="Genome Res.">
        <title>The status, quality, and expansion of the NIH full-length cDNA project: the Mammalian Gene Collection (MGC).</title>
        <authorList>
            <consortium name="The MGC Project Team"/>
        </authorList>
    </citation>
    <scope>NUCLEOTIDE SEQUENCE [LARGE SCALE MRNA]</scope>
    <source>
        <tissue>Brain</tissue>
    </source>
</reference>
<reference key="5">
    <citation type="journal article" date="2011" name="Traffic">
        <title>Rab GTPases regulating phagosome maturation are differentially recruited to mycobacterial phagosomes.</title>
        <authorList>
            <person name="Seto S."/>
            <person name="Tsujimura K."/>
            <person name="Koide Y."/>
        </authorList>
    </citation>
    <scope>FUNCTION</scope>
    <scope>SUBCELLULAR LOCATION</scope>
</reference>
<reference key="6">
    <citation type="journal article" date="2013" name="PLoS ONE">
        <title>Rab39a interacts with phosphatidylinositol 3-kinase and negatively regulates autophagy induced by lipopolysaccharide stimulation in macrophages.</title>
        <authorList>
            <person name="Seto S."/>
            <person name="Sugaya K."/>
            <person name="Tsujimura K."/>
            <person name="Nagata T."/>
            <person name="Horii T."/>
            <person name="Koide Y."/>
        </authorList>
    </citation>
    <scope>FUNCTION</scope>
    <scope>INTERACTION WITH BECN1</scope>
    <scope>SUBUNIT</scope>
    <scope>SUBCELLULAR LOCATION</scope>
    <scope>MUTAGENESIS OF 34-PRO--CYS-41</scope>
</reference>
<reference key="7">
    <citation type="journal article" date="2023" name="Nat. Commun.">
        <title>C9orf72-catalyzed GTP loading of Rab39A enables HOPS-mediated membrane tethering and fusion in mammalian autophagy.</title>
        <authorList>
            <person name="Zhang S."/>
            <person name="Tong M."/>
            <person name="Zheng D."/>
            <person name="Huang H."/>
            <person name="Li L."/>
            <person name="Ungermann C."/>
            <person name="Pan Y."/>
            <person name="Luo H."/>
            <person name="Lei M."/>
            <person name="Tang Z."/>
            <person name="Fu W."/>
            <person name="Chen S."/>
            <person name="Liu X."/>
            <person name="Zhong Q."/>
        </authorList>
    </citation>
    <scope>FUNCTION</scope>
    <scope>ACTIVITY REGULATION</scope>
    <scope>INTERACTION WITH C9ORF72; VPS39; VPS41 AND STX17</scope>
    <scope>PRENYLATION</scope>
    <scope>MUTAGENESIS OF SER-22; GLN-72; CYS-215 AND CYS-217</scope>
    <scope>SUBCELLULAR LOCATION</scope>
</reference>
<gene>
    <name evidence="10" type="primary">RAB39A</name>
    <name type="synonym">RAB39</name>
</gene>
<organism>
    <name type="scientific">Homo sapiens</name>
    <name type="common">Human</name>
    <dbReference type="NCBI Taxonomy" id="9606"/>
    <lineage>
        <taxon>Eukaryota</taxon>
        <taxon>Metazoa</taxon>
        <taxon>Chordata</taxon>
        <taxon>Craniata</taxon>
        <taxon>Vertebrata</taxon>
        <taxon>Euteleostomi</taxon>
        <taxon>Mammalia</taxon>
        <taxon>Eutheria</taxon>
        <taxon>Euarchontoglires</taxon>
        <taxon>Primates</taxon>
        <taxon>Haplorrhini</taxon>
        <taxon>Catarrhini</taxon>
        <taxon>Hominidae</taxon>
        <taxon>Homo</taxon>
    </lineage>
</organism>
<protein>
    <recommendedName>
        <fullName>Ras-related protein Rab-39A</fullName>
        <shortName>Rab-39</shortName>
        <ecNumber evidence="2">3.6.5.2</ecNumber>
    </recommendedName>
</protein>
<comment type="function">
    <text evidence="3 6 7 8">The small GTPases Rab are key regulators of intracellular membrane trafficking, from the formation of transport vesicles to their fusion with membranes (PubMed:21255211). Rabs cycle between an inactive GDP-bound form and an active GTP-bound form that is able to recruit to membranes different sets of downstream effectors directly responsible for vesicle formation, movement, tethering and fusion (PubMed:21255211). RAB39A regulates autophagosome-lysosome fusion via recruitment of the HOPS endosomal tethering complex onto lysosomes; this process involves lysosomal RAB39A and autophagosomal RAB2A recruitment of HOPS subcomplexes VPS41-VPS16-VPS18-VPS33A and VPS39-VPS11, respectively, which assemble into a functional complex to mediate membrane tethering and SNAREs-driven membrane fusion (PubMed:37821429). Also negatively regulates lipopolysaccharide (LPS)-induced autophagosome formation in macrophages, possibly by implicating PI3K (PubMed:24349490). Promotes the delivery of MHC-I molecules from the ER to phagosomes and the generation of peptide-loaded MHC-I complexes in phagosomes, thus enhancing antigen cross-presentation by dendritic cells (By similarity). Plays a role in the maturation and acidification of phagosomes that engulf pathogens, such as S.aureus and M.tuberculosis (PubMed:21255211). Plays a role in the fusion of phagosomes with lysosomes (PubMed:21255211). May be involved in multiple neurite formation (By similarity).</text>
</comment>
<comment type="catalytic activity">
    <reaction evidence="2">
        <text>GTP + H2O = GDP + phosphate + H(+)</text>
        <dbReference type="Rhea" id="RHEA:19669"/>
        <dbReference type="ChEBI" id="CHEBI:15377"/>
        <dbReference type="ChEBI" id="CHEBI:15378"/>
        <dbReference type="ChEBI" id="CHEBI:37565"/>
        <dbReference type="ChEBI" id="CHEBI:43474"/>
        <dbReference type="ChEBI" id="CHEBI:58189"/>
        <dbReference type="EC" id="3.6.5.2"/>
    </reaction>
    <physiologicalReaction direction="left-to-right" evidence="2">
        <dbReference type="Rhea" id="RHEA:19670"/>
    </physiologicalReaction>
</comment>
<comment type="cofactor">
    <cofactor evidence="4">
        <name>Mg(2+)</name>
        <dbReference type="ChEBI" id="CHEBI:18420"/>
    </cofactor>
</comment>
<comment type="activity regulation">
    <text evidence="8 9">Regulated by guanine nucleotide exchange factors (GEFs) including c9Orf72, which promote the exchange of bound GDP for free GTP (PubMed:37821429). Regulated by GTPase activating proteins (GAPs) which increase the GTP hydrolysis activity (Probable). Inhibited by GDP dissociation inhibitors (GDIs) (Probable).</text>
</comment>
<comment type="subunit">
    <text evidence="3 7 8">Interacts (GDP-bound) with C9orf72; C9orf72 acts as a GEF for RAB39A (PubMed:37821429). Interacts (GTP-bound) with HOPS complex components VPS39 and VPS41, and STX17; interaction between HOPS components and RAB39A contributes to obtaining a functional HOPS complex that promotes membrane fusion driven by STX17-SNAP29-VAMP8 (PubMed:37821429). Interacts with BECN1. Probably associates with the PI3K (PI3KC3/PI3K-III/class III phosphatidylinositol 3-kinase) complex (PubMed:24349490). Interacts with UACA (By similarity). Interacts with isoform a of RASSF1 (By similarity). Does not interact with isoform c of RASSF1 (By similarity).</text>
</comment>
<comment type="interaction">
    <interactant intactId="EBI-3048577">
        <id>Q14964</id>
    </interactant>
    <interactant intactId="EBI-949378">
        <id>Q14457</id>
        <label>BECN1</label>
    </interactant>
    <organismsDiffer>false</organismsDiffer>
    <experiments>2</experiments>
</comment>
<comment type="interaction">
    <interactant intactId="EBI-3048577">
        <id>Q14964</id>
    </interactant>
    <interactant intactId="EBI-2548012">
        <id>Q9H2G9</id>
        <label>BLZF1</label>
    </interactant>
    <organismsDiffer>false</organismsDiffer>
    <experiments>8</experiments>
</comment>
<comment type="interaction">
    <interactant intactId="EBI-3048577">
        <id>Q14964</id>
    </interactant>
    <interactant intactId="EBI-618309">
        <id>Q08379</id>
        <label>GOLGA2</label>
    </interactant>
    <organismsDiffer>false</organismsDiffer>
    <experiments>6</experiments>
</comment>
<comment type="interaction">
    <interactant intactId="EBI-3048577">
        <id>Q14964</id>
    </interactant>
    <interactant intactId="EBI-739467">
        <id>Q9H8Y8</id>
        <label>GORASP2</label>
    </interactant>
    <organismsDiffer>false</organismsDiffer>
    <experiments>3</experiments>
</comment>
<comment type="interaction">
    <interactant intactId="EBI-3048577">
        <id>Q14964</id>
    </interactant>
    <interactant intactId="EBI-726075">
        <id>P61026</id>
        <label>RAB10</label>
    </interactant>
    <organismsDiffer>false</organismsDiffer>
    <experiments>2</experiments>
</comment>
<comment type="subcellular location">
    <subcellularLocation>
        <location evidence="9">Cell membrane</location>
        <topology evidence="9">Lipid-anchor</topology>
        <orientation evidence="9">Cytoplasmic side</orientation>
    </subcellularLocation>
    <subcellularLocation>
        <location evidence="6 7">Cytoplasmic vesicle</location>
        <location evidence="6 7">Phagosome membrane</location>
        <topology evidence="9">Lipid-anchor</topology>
        <orientation evidence="9">Cytoplasmic side</orientation>
    </subcellularLocation>
    <subcellularLocation>
        <location evidence="7 8">Lysosome membrane</location>
    </subcellularLocation>
    <subcellularLocation>
        <location evidence="8">Autolysosome membrane</location>
    </subcellularLocation>
    <text evidence="3 6 8">Recruited to phagosomes containing S.aureus or M.tuberculosis (PubMed:21255211). Majorly localized on lysosomes under basal conditions (PubMed:37821429). Majorly localized on autophagosomes/autolysosomes under autophagy-induced conditions (PubMed:37821429). Colocalized with VPS39 and VPS41 on lysosomes or autolysosomes (PubMed:37821429). Colocalized with STX17 on autolysosomes in autophagy-induced conditions (PubMed:37821429). Localized (GTP-bound) to phagosomes in dendritic cells; shuttles vesicles from the ER-Golgi to the phagosome (By similarity).</text>
</comment>
<comment type="domain">
    <text evidence="4">Switch I, switch II and the interswitch regions are characteristic of Rab GTPases and mediate the interactions with Rab downstream effectors. The switch regions undergo conformational changes upon nucleotide binding which drive interaction with specific sets of effector proteins, with most effectors only binding to GTP-bound Rab.</text>
</comment>
<comment type="PTM">
    <text evidence="8">Prenylated. Prenylation is required for association with cellular membranes.</text>
</comment>
<comment type="similarity">
    <text evidence="9">Belongs to the small GTPase superfamily. Rab family.</text>
</comment>
<keyword id="KW-0072">Autophagy</keyword>
<keyword id="KW-1003">Cell membrane</keyword>
<keyword id="KW-0968">Cytoplasmic vesicle</keyword>
<keyword id="KW-0342">GTP-binding</keyword>
<keyword id="KW-0378">Hydrolase</keyword>
<keyword id="KW-0449">Lipoprotein</keyword>
<keyword id="KW-0458">Lysosome</keyword>
<keyword id="KW-0460">Magnesium</keyword>
<keyword id="KW-0472">Membrane</keyword>
<keyword id="KW-0479">Metal-binding</keyword>
<keyword id="KW-0488">Methylation</keyword>
<keyword id="KW-0547">Nucleotide-binding</keyword>
<keyword id="KW-0636">Prenylation</keyword>
<keyword id="KW-0653">Protein transport</keyword>
<keyword id="KW-1267">Proteomics identification</keyword>
<keyword id="KW-1185">Reference proteome</keyword>
<keyword id="KW-0813">Transport</keyword>
<dbReference type="EC" id="3.6.5.2" evidence="2"/>
<dbReference type="EMBL" id="X99962">
    <property type="protein sequence ID" value="CAA68227.1"/>
    <property type="molecule type" value="mRNA"/>
</dbReference>
<dbReference type="EMBL" id="AK292969">
    <property type="protein sequence ID" value="BAF85658.1"/>
    <property type="molecule type" value="mRNA"/>
</dbReference>
<dbReference type="EMBL" id="CH471065">
    <property type="protein sequence ID" value="EAW67100.1"/>
    <property type="molecule type" value="Genomic_DNA"/>
</dbReference>
<dbReference type="EMBL" id="BC028064">
    <property type="protein sequence ID" value="AAH28064.1"/>
    <property type="molecule type" value="mRNA"/>
</dbReference>
<dbReference type="CCDS" id="CCDS8338.1"/>
<dbReference type="RefSeq" id="NP_059986.1">
    <property type="nucleotide sequence ID" value="NM_017516.3"/>
</dbReference>
<dbReference type="SMR" id="Q14964"/>
<dbReference type="BioGRID" id="120117">
    <property type="interactions" value="32"/>
</dbReference>
<dbReference type="DIP" id="DIP-60521N"/>
<dbReference type="FunCoup" id="Q14964">
    <property type="interactions" value="1103"/>
</dbReference>
<dbReference type="IntAct" id="Q14964">
    <property type="interactions" value="20"/>
</dbReference>
<dbReference type="MINT" id="Q14964"/>
<dbReference type="STRING" id="9606.ENSP00000322594"/>
<dbReference type="GlyGen" id="Q14964">
    <property type="glycosylation" value="1 site, 1 O-linked glycan (1 site)"/>
</dbReference>
<dbReference type="iPTMnet" id="Q14964"/>
<dbReference type="PhosphoSitePlus" id="Q14964"/>
<dbReference type="SwissPalm" id="Q14964"/>
<dbReference type="BioMuta" id="RAB39A"/>
<dbReference type="DMDM" id="46577701"/>
<dbReference type="jPOST" id="Q14964"/>
<dbReference type="MassIVE" id="Q14964"/>
<dbReference type="PaxDb" id="9606-ENSP00000322594"/>
<dbReference type="PeptideAtlas" id="Q14964"/>
<dbReference type="ProteomicsDB" id="60261"/>
<dbReference type="Pumba" id="Q14964"/>
<dbReference type="Antibodypedia" id="31924">
    <property type="antibodies" value="116 antibodies from 27 providers"/>
</dbReference>
<dbReference type="DNASU" id="54734"/>
<dbReference type="Ensembl" id="ENST00000320578.3">
    <property type="protein sequence ID" value="ENSP00000322594.2"/>
    <property type="gene ID" value="ENSG00000179331.3"/>
</dbReference>
<dbReference type="GeneID" id="54734"/>
<dbReference type="KEGG" id="hsa:54734"/>
<dbReference type="MANE-Select" id="ENST00000320578.3">
    <property type="protein sequence ID" value="ENSP00000322594.2"/>
    <property type="RefSeq nucleotide sequence ID" value="NM_017516.3"/>
    <property type="RefSeq protein sequence ID" value="NP_059986.1"/>
</dbReference>
<dbReference type="UCSC" id="uc001pjt.4">
    <property type="organism name" value="human"/>
</dbReference>
<dbReference type="AGR" id="HGNC:16521"/>
<dbReference type="CTD" id="54734"/>
<dbReference type="DisGeNET" id="54734"/>
<dbReference type="GeneCards" id="RAB39A"/>
<dbReference type="HGNC" id="HGNC:16521">
    <property type="gene designation" value="RAB39A"/>
</dbReference>
<dbReference type="HPA" id="ENSG00000179331">
    <property type="expression patterns" value="Tissue enhanced (brain, lymphoid tissue)"/>
</dbReference>
<dbReference type="MIM" id="619558">
    <property type="type" value="gene"/>
</dbReference>
<dbReference type="neXtProt" id="NX_Q14964"/>
<dbReference type="OpenTargets" id="ENSG00000179331"/>
<dbReference type="PharmGKB" id="PA34130"/>
<dbReference type="VEuPathDB" id="HostDB:ENSG00000179331"/>
<dbReference type="eggNOG" id="KOG0091">
    <property type="taxonomic scope" value="Eukaryota"/>
</dbReference>
<dbReference type="GeneTree" id="ENSGT00940000159933"/>
<dbReference type="HOGENOM" id="CLU_041217_23_1_1"/>
<dbReference type="InParanoid" id="Q14964"/>
<dbReference type="OMA" id="LGEQCPC"/>
<dbReference type="OrthoDB" id="9989112at2759"/>
<dbReference type="PAN-GO" id="Q14964">
    <property type="GO annotations" value="6 GO annotations based on evolutionary models"/>
</dbReference>
<dbReference type="PhylomeDB" id="Q14964"/>
<dbReference type="TreeFam" id="TF300032"/>
<dbReference type="PathwayCommons" id="Q14964"/>
<dbReference type="Reactome" id="R-HSA-6811438">
    <property type="pathway name" value="Intra-Golgi traffic"/>
</dbReference>
<dbReference type="Reactome" id="R-HSA-8873719">
    <property type="pathway name" value="RAB geranylgeranylation"/>
</dbReference>
<dbReference type="Reactome" id="R-HSA-8876198">
    <property type="pathway name" value="RAB GEFs exchange GTP for GDP on RABs"/>
</dbReference>
<dbReference type="SignaLink" id="Q14964"/>
<dbReference type="BioGRID-ORCS" id="54734">
    <property type="hits" value="13 hits in 1145 CRISPR screens"/>
</dbReference>
<dbReference type="ChiTaRS" id="RAB39A">
    <property type="organism name" value="human"/>
</dbReference>
<dbReference type="GenomeRNAi" id="54734"/>
<dbReference type="Pharos" id="Q14964">
    <property type="development level" value="Tbio"/>
</dbReference>
<dbReference type="PRO" id="PR:Q14964"/>
<dbReference type="Proteomes" id="UP000005640">
    <property type="component" value="Chromosome 11"/>
</dbReference>
<dbReference type="RNAct" id="Q14964">
    <property type="molecule type" value="protein"/>
</dbReference>
<dbReference type="Bgee" id="ENSG00000179331">
    <property type="expression patterns" value="Expressed in primordial germ cell in gonad and 97 other cell types or tissues"/>
</dbReference>
<dbReference type="GO" id="GO:0120281">
    <property type="term" value="C:autolysosome membrane"/>
    <property type="evidence" value="ECO:0000314"/>
    <property type="project" value="UniProtKB"/>
</dbReference>
<dbReference type="GO" id="GO:0005829">
    <property type="term" value="C:cytosol"/>
    <property type="evidence" value="ECO:0000304"/>
    <property type="project" value="Reactome"/>
</dbReference>
<dbReference type="GO" id="GO:0000139">
    <property type="term" value="C:Golgi membrane"/>
    <property type="evidence" value="ECO:0000304"/>
    <property type="project" value="Reactome"/>
</dbReference>
<dbReference type="GO" id="GO:0005765">
    <property type="term" value="C:lysosomal membrane"/>
    <property type="evidence" value="ECO:0000314"/>
    <property type="project" value="UniProtKB"/>
</dbReference>
<dbReference type="GO" id="GO:0045335">
    <property type="term" value="C:phagocytic vesicle"/>
    <property type="evidence" value="ECO:0000314"/>
    <property type="project" value="UniProtKB"/>
</dbReference>
<dbReference type="GO" id="GO:0030670">
    <property type="term" value="C:phagocytic vesicle membrane"/>
    <property type="evidence" value="ECO:0007669"/>
    <property type="project" value="UniProtKB-SubCell"/>
</dbReference>
<dbReference type="GO" id="GO:0005886">
    <property type="term" value="C:plasma membrane"/>
    <property type="evidence" value="ECO:0007669"/>
    <property type="project" value="UniProtKB-SubCell"/>
</dbReference>
<dbReference type="GO" id="GO:0003925">
    <property type="term" value="F:G protein activity"/>
    <property type="evidence" value="ECO:0000314"/>
    <property type="project" value="UniProtKB"/>
</dbReference>
<dbReference type="GO" id="GO:0005525">
    <property type="term" value="F:GTP binding"/>
    <property type="evidence" value="ECO:0000318"/>
    <property type="project" value="GO_Central"/>
</dbReference>
<dbReference type="GO" id="GO:0003924">
    <property type="term" value="F:GTPase activity"/>
    <property type="evidence" value="ECO:0000318"/>
    <property type="project" value="GO_Central"/>
</dbReference>
<dbReference type="GO" id="GO:0061909">
    <property type="term" value="P:autophagosome-lysosome fusion"/>
    <property type="evidence" value="ECO:0000315"/>
    <property type="project" value="UniProtKB"/>
</dbReference>
<dbReference type="GO" id="GO:0090383">
    <property type="term" value="P:phagosome acidification"/>
    <property type="evidence" value="ECO:0000315"/>
    <property type="project" value="UniProtKB"/>
</dbReference>
<dbReference type="GO" id="GO:0090385">
    <property type="term" value="P:phagosome-lysosome fusion"/>
    <property type="evidence" value="ECO:0000315"/>
    <property type="project" value="UniProtKB"/>
</dbReference>
<dbReference type="GO" id="GO:0015031">
    <property type="term" value="P:protein transport"/>
    <property type="evidence" value="ECO:0007669"/>
    <property type="project" value="UniProtKB-KW"/>
</dbReference>
<dbReference type="GO" id="GO:0032482">
    <property type="term" value="P:Rab protein signal transduction"/>
    <property type="evidence" value="ECO:0007669"/>
    <property type="project" value="InterPro"/>
</dbReference>
<dbReference type="GO" id="GO:0016192">
    <property type="term" value="P:vesicle-mediated transport"/>
    <property type="evidence" value="ECO:0000318"/>
    <property type="project" value="GO_Central"/>
</dbReference>
<dbReference type="CDD" id="cd04111">
    <property type="entry name" value="Rab39"/>
    <property type="match status" value="1"/>
</dbReference>
<dbReference type="FunFam" id="3.40.50.300:FF:000358">
    <property type="entry name" value="RAB39B, member RAS oncogene family"/>
    <property type="match status" value="1"/>
</dbReference>
<dbReference type="Gene3D" id="3.40.50.300">
    <property type="entry name" value="P-loop containing nucleotide triphosphate hydrolases"/>
    <property type="match status" value="1"/>
</dbReference>
<dbReference type="InterPro" id="IPR027417">
    <property type="entry name" value="P-loop_NTPase"/>
</dbReference>
<dbReference type="InterPro" id="IPR041818">
    <property type="entry name" value="Rab39"/>
</dbReference>
<dbReference type="InterPro" id="IPR050209">
    <property type="entry name" value="Rab_GTPases_membrane_traffic"/>
</dbReference>
<dbReference type="InterPro" id="IPR005225">
    <property type="entry name" value="Small_GTP-bd"/>
</dbReference>
<dbReference type="InterPro" id="IPR001806">
    <property type="entry name" value="Small_GTPase"/>
</dbReference>
<dbReference type="NCBIfam" id="TIGR00231">
    <property type="entry name" value="small_GTP"/>
    <property type="match status" value="1"/>
</dbReference>
<dbReference type="PANTHER" id="PTHR47979">
    <property type="entry name" value="DRAB11-RELATED"/>
    <property type="match status" value="1"/>
</dbReference>
<dbReference type="Pfam" id="PF00071">
    <property type="entry name" value="Ras"/>
    <property type="match status" value="1"/>
</dbReference>
<dbReference type="PRINTS" id="PR00449">
    <property type="entry name" value="RASTRNSFRMNG"/>
</dbReference>
<dbReference type="SMART" id="SM00175">
    <property type="entry name" value="RAB"/>
    <property type="match status" value="1"/>
</dbReference>
<dbReference type="SMART" id="SM00176">
    <property type="entry name" value="RAN"/>
    <property type="match status" value="1"/>
</dbReference>
<dbReference type="SMART" id="SM00173">
    <property type="entry name" value="RAS"/>
    <property type="match status" value="1"/>
</dbReference>
<dbReference type="SMART" id="SM00174">
    <property type="entry name" value="RHO"/>
    <property type="match status" value="1"/>
</dbReference>
<dbReference type="SUPFAM" id="SSF52540">
    <property type="entry name" value="P-loop containing nucleoside triphosphate hydrolases"/>
    <property type="match status" value="1"/>
</dbReference>
<dbReference type="PROSITE" id="PS51419">
    <property type="entry name" value="RAB"/>
    <property type="match status" value="1"/>
</dbReference>
<name>RB39A_HUMAN</name>
<feature type="chain" id="PRO_0000121253" description="Ras-related protein Rab-39A">
    <location>
        <begin position="1"/>
        <end position="217"/>
    </location>
</feature>
<feature type="region of interest" description="Switch-I" evidence="5">
    <location>
        <begin position="39"/>
        <end position="47"/>
    </location>
</feature>
<feature type="region of interest" description="Switch-II" evidence="5">
    <location>
        <begin position="71"/>
        <end position="87"/>
    </location>
</feature>
<feature type="binding site" evidence="4">
    <location>
        <position position="17"/>
    </location>
    <ligand>
        <name>GTP</name>
        <dbReference type="ChEBI" id="CHEBI:37565"/>
    </ligand>
</feature>
<feature type="binding site" evidence="4">
    <location>
        <position position="20"/>
    </location>
    <ligand>
        <name>GTP</name>
        <dbReference type="ChEBI" id="CHEBI:37565"/>
    </ligand>
</feature>
<feature type="binding site" evidence="4">
    <location>
        <position position="21"/>
    </location>
    <ligand>
        <name>GTP</name>
        <dbReference type="ChEBI" id="CHEBI:37565"/>
    </ligand>
</feature>
<feature type="binding site" evidence="4">
    <location>
        <position position="22"/>
    </location>
    <ligand>
        <name>GTP</name>
        <dbReference type="ChEBI" id="CHEBI:37565"/>
    </ligand>
</feature>
<feature type="binding site" evidence="4">
    <location>
        <position position="22"/>
    </location>
    <ligand>
        <name>Mg(2+)</name>
        <dbReference type="ChEBI" id="CHEBI:18420"/>
    </ligand>
</feature>
<feature type="binding site" evidence="4">
    <location>
        <position position="23"/>
    </location>
    <ligand>
        <name>GTP</name>
        <dbReference type="ChEBI" id="CHEBI:37565"/>
    </ligand>
</feature>
<feature type="binding site" evidence="4">
    <location>
        <position position="44"/>
    </location>
    <ligand>
        <name>GTP</name>
        <dbReference type="ChEBI" id="CHEBI:37565"/>
    </ligand>
</feature>
<feature type="binding site" evidence="4">
    <location>
        <position position="44"/>
    </location>
    <ligand>
        <name>Mg(2+)</name>
        <dbReference type="ChEBI" id="CHEBI:18420"/>
    </ligand>
</feature>
<feature type="binding site" evidence="2 4">
    <location>
        <position position="68"/>
    </location>
    <ligand>
        <name>Mg(2+)</name>
        <dbReference type="ChEBI" id="CHEBI:18420"/>
    </ligand>
</feature>
<feature type="binding site" evidence="4">
    <location>
        <position position="71"/>
    </location>
    <ligand>
        <name>GTP</name>
        <dbReference type="ChEBI" id="CHEBI:37565"/>
    </ligand>
</feature>
<feature type="binding site" evidence="4">
    <location>
        <position position="127"/>
    </location>
    <ligand>
        <name>GTP</name>
        <dbReference type="ChEBI" id="CHEBI:37565"/>
    </ligand>
</feature>
<feature type="binding site" evidence="4">
    <location>
        <position position="128"/>
    </location>
    <ligand>
        <name>GTP</name>
        <dbReference type="ChEBI" id="CHEBI:37565"/>
    </ligand>
</feature>
<feature type="binding site" evidence="4">
    <location>
        <position position="130"/>
    </location>
    <ligand>
        <name>GTP</name>
        <dbReference type="ChEBI" id="CHEBI:37565"/>
    </ligand>
</feature>
<feature type="binding site" evidence="4">
    <location>
        <position position="158"/>
    </location>
    <ligand>
        <name>GTP</name>
        <dbReference type="ChEBI" id="CHEBI:37565"/>
    </ligand>
</feature>
<feature type="binding site" evidence="4">
    <location>
        <position position="159"/>
    </location>
    <ligand>
        <name>GTP</name>
        <dbReference type="ChEBI" id="CHEBI:37565"/>
    </ligand>
</feature>
<feature type="modified residue" description="Cysteine methyl ester" evidence="1">
    <location>
        <position position="217"/>
    </location>
</feature>
<feature type="lipid moiety-binding region" description="S-geranylgeranyl cysteine" evidence="1">
    <location>
        <position position="215"/>
    </location>
</feature>
<feature type="lipid moiety-binding region" description="S-geranylgeranyl cysteine" evidence="1">
    <location>
        <position position="217"/>
    </location>
</feature>
<feature type="mutagenesis site" description="Constitutively inactive (GDP-bound) mutant. Loss of localization to autolysosomes, decreased interaction with VPS39 and VPS41 and impaired autophagic flux under autophagy-induced conditions." evidence="8">
    <original>S</original>
    <variation>N</variation>
    <location>
        <position position="22"/>
    </location>
</feature>
<feature type="mutagenesis site" description="Disrupts interaction with BECN1." evidence="7">
    <original>PGLRSPAC</original>
    <variation>AQVS</variation>
    <location>
        <begin position="34"/>
        <end position="41"/>
    </location>
</feature>
<feature type="mutagenesis site" description="Constitutively active (GTP-bound) mutant. No change in subcellular localization under autophagy-induced conditions." evidence="8">
    <original>Q</original>
    <variation>L</variation>
    <location>
        <position position="72"/>
    </location>
</feature>
<feature type="mutagenesis site" description="Non-prenylatable mutant; when associated with A-217. Loss of localization to autolysosomes and impaired autophagic flux under autophagy-induced conditions; when associated with A-217." evidence="8">
    <original>C</original>
    <variation>A</variation>
    <location>
        <position position="215"/>
    </location>
</feature>
<feature type="mutagenesis site" description="Non-prenylatable mutant; when associated with A-215. Loss of localization to autolysosomes and impaired autophagic flux under autophagy-induced conditions; when associated with A-215." evidence="8">
    <original>C</original>
    <variation>A</variation>
    <location>
        <position position="217"/>
    </location>
</feature>
<feature type="sequence conflict" description="In Ref. 1; CAA68227." evidence="9" ref="1">
    <original>K</original>
    <variation>M</variation>
    <location>
        <position position="152"/>
    </location>
</feature>
<feature type="sequence conflict" description="In Ref. 1; CAA68227." evidence="9" ref="1">
    <original>F</original>
    <variation>S</variation>
    <location>
        <position position="168"/>
    </location>
</feature>
<feature type="sequence conflict" description="In Ref. 1; CAA68227." evidence="9" ref="1">
    <original>YE</original>
    <variation>FD</variation>
    <location>
        <begin position="176"/>
        <end position="177"/>
    </location>
</feature>
<feature type="sequence conflict" description="In Ref. 1; CAA68227." evidence="9" ref="1">
    <original>S</original>
    <variation>P</variation>
    <location>
        <position position="204"/>
    </location>
</feature>
<feature type="sequence conflict" description="In Ref. 1; CAA68227." evidence="9" ref="1">
    <original>F</original>
    <variation>S</variation>
    <location>
        <position position="216"/>
    </location>
</feature>